<keyword id="KW-0488">Methylation</keyword>
<keyword id="KW-1185">Reference proteome</keyword>
<keyword id="KW-0687">Ribonucleoprotein</keyword>
<keyword id="KW-0689">Ribosomal protein</keyword>
<keyword id="KW-0694">RNA-binding</keyword>
<keyword id="KW-0699">rRNA-binding</keyword>
<proteinExistence type="inferred from homology"/>
<gene>
    <name evidence="1" type="primary">rplK</name>
    <name type="ordered locus">LBA0359</name>
</gene>
<evidence type="ECO:0000255" key="1">
    <source>
        <dbReference type="HAMAP-Rule" id="MF_00736"/>
    </source>
</evidence>
<evidence type="ECO:0000305" key="2"/>
<dbReference type="EMBL" id="CP000033">
    <property type="protein sequence ID" value="AAV42251.1"/>
    <property type="molecule type" value="Genomic_DNA"/>
</dbReference>
<dbReference type="RefSeq" id="WP_003549095.1">
    <property type="nucleotide sequence ID" value="NC_006814.3"/>
</dbReference>
<dbReference type="RefSeq" id="YP_193282.1">
    <property type="nucleotide sequence ID" value="NC_006814.3"/>
</dbReference>
<dbReference type="SMR" id="Q5FM23"/>
<dbReference type="STRING" id="272621.LBA0359"/>
<dbReference type="GeneID" id="93290541"/>
<dbReference type="KEGG" id="lac:LBA0359"/>
<dbReference type="PATRIC" id="fig|272621.13.peg.346"/>
<dbReference type="eggNOG" id="COG0080">
    <property type="taxonomic scope" value="Bacteria"/>
</dbReference>
<dbReference type="HOGENOM" id="CLU_074237_2_1_9"/>
<dbReference type="OrthoDB" id="9802408at2"/>
<dbReference type="BioCyc" id="LACI272621:G1G49-354-MONOMER"/>
<dbReference type="Proteomes" id="UP000006381">
    <property type="component" value="Chromosome"/>
</dbReference>
<dbReference type="GO" id="GO:0022625">
    <property type="term" value="C:cytosolic large ribosomal subunit"/>
    <property type="evidence" value="ECO:0007669"/>
    <property type="project" value="TreeGrafter"/>
</dbReference>
<dbReference type="GO" id="GO:0070180">
    <property type="term" value="F:large ribosomal subunit rRNA binding"/>
    <property type="evidence" value="ECO:0007669"/>
    <property type="project" value="UniProtKB-UniRule"/>
</dbReference>
<dbReference type="GO" id="GO:0003735">
    <property type="term" value="F:structural constituent of ribosome"/>
    <property type="evidence" value="ECO:0007669"/>
    <property type="project" value="InterPro"/>
</dbReference>
<dbReference type="GO" id="GO:0006412">
    <property type="term" value="P:translation"/>
    <property type="evidence" value="ECO:0007669"/>
    <property type="project" value="UniProtKB-UniRule"/>
</dbReference>
<dbReference type="CDD" id="cd00349">
    <property type="entry name" value="Ribosomal_L11"/>
    <property type="match status" value="1"/>
</dbReference>
<dbReference type="FunFam" id="1.10.10.250:FF:000001">
    <property type="entry name" value="50S ribosomal protein L11"/>
    <property type="match status" value="1"/>
</dbReference>
<dbReference type="FunFam" id="3.30.1550.10:FF:000001">
    <property type="entry name" value="50S ribosomal protein L11"/>
    <property type="match status" value="1"/>
</dbReference>
<dbReference type="Gene3D" id="1.10.10.250">
    <property type="entry name" value="Ribosomal protein L11, C-terminal domain"/>
    <property type="match status" value="1"/>
</dbReference>
<dbReference type="Gene3D" id="3.30.1550.10">
    <property type="entry name" value="Ribosomal protein L11/L12, N-terminal domain"/>
    <property type="match status" value="1"/>
</dbReference>
<dbReference type="HAMAP" id="MF_00736">
    <property type="entry name" value="Ribosomal_uL11"/>
    <property type="match status" value="1"/>
</dbReference>
<dbReference type="InterPro" id="IPR000911">
    <property type="entry name" value="Ribosomal_uL11"/>
</dbReference>
<dbReference type="InterPro" id="IPR006519">
    <property type="entry name" value="Ribosomal_uL11_bac-typ"/>
</dbReference>
<dbReference type="InterPro" id="IPR020783">
    <property type="entry name" value="Ribosomal_uL11_C"/>
</dbReference>
<dbReference type="InterPro" id="IPR036769">
    <property type="entry name" value="Ribosomal_uL11_C_sf"/>
</dbReference>
<dbReference type="InterPro" id="IPR020785">
    <property type="entry name" value="Ribosomal_uL11_CS"/>
</dbReference>
<dbReference type="InterPro" id="IPR020784">
    <property type="entry name" value="Ribosomal_uL11_N"/>
</dbReference>
<dbReference type="InterPro" id="IPR036796">
    <property type="entry name" value="Ribosomal_uL11_N_sf"/>
</dbReference>
<dbReference type="NCBIfam" id="TIGR01632">
    <property type="entry name" value="L11_bact"/>
    <property type="match status" value="1"/>
</dbReference>
<dbReference type="PANTHER" id="PTHR11661">
    <property type="entry name" value="60S RIBOSOMAL PROTEIN L12"/>
    <property type="match status" value="1"/>
</dbReference>
<dbReference type="PANTHER" id="PTHR11661:SF1">
    <property type="entry name" value="LARGE RIBOSOMAL SUBUNIT PROTEIN UL11M"/>
    <property type="match status" value="1"/>
</dbReference>
<dbReference type="Pfam" id="PF00298">
    <property type="entry name" value="Ribosomal_L11"/>
    <property type="match status" value="1"/>
</dbReference>
<dbReference type="Pfam" id="PF03946">
    <property type="entry name" value="Ribosomal_L11_N"/>
    <property type="match status" value="1"/>
</dbReference>
<dbReference type="SMART" id="SM00649">
    <property type="entry name" value="RL11"/>
    <property type="match status" value="1"/>
</dbReference>
<dbReference type="SUPFAM" id="SSF54747">
    <property type="entry name" value="Ribosomal L11/L12e N-terminal domain"/>
    <property type="match status" value="1"/>
</dbReference>
<dbReference type="SUPFAM" id="SSF46906">
    <property type="entry name" value="Ribosomal protein L11, C-terminal domain"/>
    <property type="match status" value="1"/>
</dbReference>
<dbReference type="PROSITE" id="PS00359">
    <property type="entry name" value="RIBOSOMAL_L11"/>
    <property type="match status" value="1"/>
</dbReference>
<sequence length="141" mass="15003">MAKKVINVVKLQIPAGAATPAPPVGPALGQAGINIVGFTKDFNARTADQKGMIIPVVITVYEDRSFEFITKTPPAPVLLKQAAKIDKASGEPNTKKVGKVTKDQVKEIAETKMKDLNAADIEAAMRMVEGTARSMGIEVED</sequence>
<name>RL11_LACAC</name>
<organism>
    <name type="scientific">Lactobacillus acidophilus (strain ATCC 700396 / NCK56 / N2 / NCFM)</name>
    <dbReference type="NCBI Taxonomy" id="272621"/>
    <lineage>
        <taxon>Bacteria</taxon>
        <taxon>Bacillati</taxon>
        <taxon>Bacillota</taxon>
        <taxon>Bacilli</taxon>
        <taxon>Lactobacillales</taxon>
        <taxon>Lactobacillaceae</taxon>
        <taxon>Lactobacillus</taxon>
    </lineage>
</organism>
<comment type="function">
    <text evidence="1">Forms part of the ribosomal stalk which helps the ribosome interact with GTP-bound translation factors.</text>
</comment>
<comment type="subunit">
    <text evidence="1">Part of the ribosomal stalk of the 50S ribosomal subunit. Interacts with L10 and the large rRNA to form the base of the stalk. L10 forms an elongated spine to which L12 dimers bind in a sequential fashion forming a multimeric L10(L12)X complex.</text>
</comment>
<comment type="PTM">
    <text evidence="1">One or more lysine residues are methylated.</text>
</comment>
<comment type="similarity">
    <text evidence="1">Belongs to the universal ribosomal protein uL11 family.</text>
</comment>
<feature type="chain" id="PRO_0000258163" description="Large ribosomal subunit protein uL11">
    <location>
        <begin position="1"/>
        <end position="141"/>
    </location>
</feature>
<accession>Q5FM23</accession>
<reference key="1">
    <citation type="journal article" date="2005" name="Proc. Natl. Acad. Sci. U.S.A.">
        <title>Complete genome sequence of the probiotic lactic acid bacterium Lactobacillus acidophilus NCFM.</title>
        <authorList>
            <person name="Altermann E."/>
            <person name="Russell W.M."/>
            <person name="Azcarate-Peril M.A."/>
            <person name="Barrangou R."/>
            <person name="Buck B.L."/>
            <person name="McAuliffe O."/>
            <person name="Souther N."/>
            <person name="Dobson A."/>
            <person name="Duong T."/>
            <person name="Callanan M."/>
            <person name="Lick S."/>
            <person name="Hamrick A."/>
            <person name="Cano R."/>
            <person name="Klaenhammer T.R."/>
        </authorList>
    </citation>
    <scope>NUCLEOTIDE SEQUENCE [LARGE SCALE GENOMIC DNA]</scope>
    <source>
        <strain>ATCC 700396 / NCK56 / N2 / NCFM</strain>
    </source>
</reference>
<protein>
    <recommendedName>
        <fullName evidence="1">Large ribosomal subunit protein uL11</fullName>
    </recommendedName>
    <alternativeName>
        <fullName evidence="2">50S ribosomal protein L11</fullName>
    </alternativeName>
</protein>